<keyword id="KW-0067">ATP-binding</keyword>
<keyword id="KW-0963">Cytoplasm</keyword>
<keyword id="KW-0460">Magnesium</keyword>
<keyword id="KW-0479">Metal-binding</keyword>
<keyword id="KW-0547">Nucleotide-binding</keyword>
<keyword id="KW-0554">One-carbon metabolism</keyword>
<keyword id="KW-0630">Potassium</keyword>
<keyword id="KW-1185">Reference proteome</keyword>
<keyword id="KW-0808">Transferase</keyword>
<accession>Q46H57</accession>
<name>METK_PROMT</name>
<organism>
    <name type="scientific">Prochlorococcus marinus (strain NATL2A)</name>
    <dbReference type="NCBI Taxonomy" id="59920"/>
    <lineage>
        <taxon>Bacteria</taxon>
        <taxon>Bacillati</taxon>
        <taxon>Cyanobacteriota</taxon>
        <taxon>Cyanophyceae</taxon>
        <taxon>Synechococcales</taxon>
        <taxon>Prochlorococcaceae</taxon>
        <taxon>Prochlorococcus</taxon>
    </lineage>
</organism>
<reference key="1">
    <citation type="journal article" date="2007" name="PLoS Genet.">
        <title>Patterns and implications of gene gain and loss in the evolution of Prochlorococcus.</title>
        <authorList>
            <person name="Kettler G.C."/>
            <person name="Martiny A.C."/>
            <person name="Huang K."/>
            <person name="Zucker J."/>
            <person name="Coleman M.L."/>
            <person name="Rodrigue S."/>
            <person name="Chen F."/>
            <person name="Lapidus A."/>
            <person name="Ferriera S."/>
            <person name="Johnson J."/>
            <person name="Steglich C."/>
            <person name="Church G.M."/>
            <person name="Richardson P."/>
            <person name="Chisholm S.W."/>
        </authorList>
    </citation>
    <scope>NUCLEOTIDE SEQUENCE [LARGE SCALE GENOMIC DNA]</scope>
    <source>
        <strain>NATL2A</strain>
    </source>
</reference>
<evidence type="ECO:0000255" key="1">
    <source>
        <dbReference type="HAMAP-Rule" id="MF_00086"/>
    </source>
</evidence>
<protein>
    <recommendedName>
        <fullName evidence="1">S-adenosylmethionine synthase</fullName>
        <shortName evidence="1">AdoMet synthase</shortName>
        <ecNumber evidence="1">2.5.1.6</ecNumber>
    </recommendedName>
    <alternativeName>
        <fullName evidence="1">MAT</fullName>
    </alternativeName>
    <alternativeName>
        <fullName evidence="1">Methionine adenosyltransferase</fullName>
    </alternativeName>
</protein>
<dbReference type="EC" id="2.5.1.6" evidence="1"/>
<dbReference type="EMBL" id="CP000095">
    <property type="protein sequence ID" value="AAZ59175.1"/>
    <property type="molecule type" value="Genomic_DNA"/>
</dbReference>
<dbReference type="RefSeq" id="WP_011294321.1">
    <property type="nucleotide sequence ID" value="NC_007335.2"/>
</dbReference>
<dbReference type="SMR" id="Q46H57"/>
<dbReference type="STRING" id="59920.PMN2A_1687"/>
<dbReference type="KEGG" id="pmn:PMN2A_1687"/>
<dbReference type="HOGENOM" id="CLU_041802_1_1_3"/>
<dbReference type="OrthoDB" id="9801686at2"/>
<dbReference type="PhylomeDB" id="Q46H57"/>
<dbReference type="UniPathway" id="UPA00315">
    <property type="reaction ID" value="UER00080"/>
</dbReference>
<dbReference type="Proteomes" id="UP000002535">
    <property type="component" value="Chromosome"/>
</dbReference>
<dbReference type="GO" id="GO:0005737">
    <property type="term" value="C:cytoplasm"/>
    <property type="evidence" value="ECO:0007669"/>
    <property type="project" value="UniProtKB-SubCell"/>
</dbReference>
<dbReference type="GO" id="GO:0005524">
    <property type="term" value="F:ATP binding"/>
    <property type="evidence" value="ECO:0007669"/>
    <property type="project" value="UniProtKB-UniRule"/>
</dbReference>
<dbReference type="GO" id="GO:0000287">
    <property type="term" value="F:magnesium ion binding"/>
    <property type="evidence" value="ECO:0007669"/>
    <property type="project" value="UniProtKB-UniRule"/>
</dbReference>
<dbReference type="GO" id="GO:0004478">
    <property type="term" value="F:methionine adenosyltransferase activity"/>
    <property type="evidence" value="ECO:0007669"/>
    <property type="project" value="UniProtKB-UniRule"/>
</dbReference>
<dbReference type="GO" id="GO:0006730">
    <property type="term" value="P:one-carbon metabolic process"/>
    <property type="evidence" value="ECO:0007669"/>
    <property type="project" value="UniProtKB-KW"/>
</dbReference>
<dbReference type="GO" id="GO:0006556">
    <property type="term" value="P:S-adenosylmethionine biosynthetic process"/>
    <property type="evidence" value="ECO:0007669"/>
    <property type="project" value="UniProtKB-UniRule"/>
</dbReference>
<dbReference type="CDD" id="cd18079">
    <property type="entry name" value="S-AdoMet_synt"/>
    <property type="match status" value="1"/>
</dbReference>
<dbReference type="FunFam" id="3.30.300.10:FF:000003">
    <property type="entry name" value="S-adenosylmethionine synthase"/>
    <property type="match status" value="1"/>
</dbReference>
<dbReference type="Gene3D" id="3.30.300.10">
    <property type="match status" value="3"/>
</dbReference>
<dbReference type="HAMAP" id="MF_00086">
    <property type="entry name" value="S_AdoMet_synth1"/>
    <property type="match status" value="1"/>
</dbReference>
<dbReference type="InterPro" id="IPR022631">
    <property type="entry name" value="ADOMET_SYNTHASE_CS"/>
</dbReference>
<dbReference type="InterPro" id="IPR022630">
    <property type="entry name" value="S-AdoMet_synt_C"/>
</dbReference>
<dbReference type="InterPro" id="IPR022629">
    <property type="entry name" value="S-AdoMet_synt_central"/>
</dbReference>
<dbReference type="InterPro" id="IPR022628">
    <property type="entry name" value="S-AdoMet_synt_N"/>
</dbReference>
<dbReference type="InterPro" id="IPR002133">
    <property type="entry name" value="S-AdoMet_synthetase"/>
</dbReference>
<dbReference type="InterPro" id="IPR022636">
    <property type="entry name" value="S-AdoMet_synthetase_sfam"/>
</dbReference>
<dbReference type="NCBIfam" id="TIGR01034">
    <property type="entry name" value="metK"/>
    <property type="match status" value="1"/>
</dbReference>
<dbReference type="PANTHER" id="PTHR11964">
    <property type="entry name" value="S-ADENOSYLMETHIONINE SYNTHETASE"/>
    <property type="match status" value="1"/>
</dbReference>
<dbReference type="Pfam" id="PF02773">
    <property type="entry name" value="S-AdoMet_synt_C"/>
    <property type="match status" value="1"/>
</dbReference>
<dbReference type="Pfam" id="PF02772">
    <property type="entry name" value="S-AdoMet_synt_M"/>
    <property type="match status" value="1"/>
</dbReference>
<dbReference type="Pfam" id="PF00438">
    <property type="entry name" value="S-AdoMet_synt_N"/>
    <property type="match status" value="1"/>
</dbReference>
<dbReference type="PIRSF" id="PIRSF000497">
    <property type="entry name" value="MAT"/>
    <property type="match status" value="1"/>
</dbReference>
<dbReference type="SUPFAM" id="SSF55973">
    <property type="entry name" value="S-adenosylmethionine synthetase"/>
    <property type="match status" value="3"/>
</dbReference>
<dbReference type="PROSITE" id="PS00376">
    <property type="entry name" value="ADOMET_SYNTHASE_1"/>
    <property type="match status" value="1"/>
</dbReference>
<dbReference type="PROSITE" id="PS00377">
    <property type="entry name" value="ADOMET_SYNTHASE_2"/>
    <property type="match status" value="1"/>
</dbReference>
<gene>
    <name evidence="1" type="primary">metK</name>
    <name type="ordered locus">PMN2A_1687</name>
</gene>
<comment type="function">
    <text evidence="1">Catalyzes the formation of S-adenosylmethionine (AdoMet) from methionine and ATP. The overall synthetic reaction is composed of two sequential steps, AdoMet formation and the subsequent tripolyphosphate hydrolysis which occurs prior to release of AdoMet from the enzyme.</text>
</comment>
<comment type="catalytic activity">
    <reaction evidence="1">
        <text>L-methionine + ATP + H2O = S-adenosyl-L-methionine + phosphate + diphosphate</text>
        <dbReference type="Rhea" id="RHEA:21080"/>
        <dbReference type="ChEBI" id="CHEBI:15377"/>
        <dbReference type="ChEBI" id="CHEBI:30616"/>
        <dbReference type="ChEBI" id="CHEBI:33019"/>
        <dbReference type="ChEBI" id="CHEBI:43474"/>
        <dbReference type="ChEBI" id="CHEBI:57844"/>
        <dbReference type="ChEBI" id="CHEBI:59789"/>
        <dbReference type="EC" id="2.5.1.6"/>
    </reaction>
</comment>
<comment type="cofactor">
    <cofactor evidence="1">
        <name>Mg(2+)</name>
        <dbReference type="ChEBI" id="CHEBI:18420"/>
    </cofactor>
    <text evidence="1">Binds 2 divalent ions per subunit.</text>
</comment>
<comment type="cofactor">
    <cofactor evidence="1">
        <name>K(+)</name>
        <dbReference type="ChEBI" id="CHEBI:29103"/>
    </cofactor>
    <text evidence="1">Binds 1 potassium ion per subunit.</text>
</comment>
<comment type="pathway">
    <text evidence="1">Amino-acid biosynthesis; S-adenosyl-L-methionine biosynthesis; S-adenosyl-L-methionine from L-methionine: step 1/1.</text>
</comment>
<comment type="subunit">
    <text evidence="1">Homotetramer; dimer of dimers.</text>
</comment>
<comment type="subcellular location">
    <subcellularLocation>
        <location evidence="1">Cytoplasm</location>
    </subcellularLocation>
</comment>
<comment type="similarity">
    <text evidence="1">Belongs to the AdoMet synthase family.</text>
</comment>
<sequence length="409" mass="44103">MSRYVFTSESVTEGHPDKICDQVSDAVLDACLSEDPTSRVACEAVVNTGLCLITGEITSKAEVDFNKLVREVIKNIGYRSASDGGFDANSCAVLVALDQQSSDIAQGVNEAEDHSTDPLDQVGAGDQGIMFGFACDETPELMPLPISLAHRLARRLALVRHQQLIDYLLPDGKTQVSVSYENGVPCSIDTILISTQHKSEVDGITLEEEIQKRIAKDLWKFVVEPATEDLPLKPAKGSTRFLVNPTGKFVIGGPQGDAGLTGRKIIVDTYGGYARHGGGAFSGKDPTKVDRSAAYAARFVAKALVAANLAKKVEVQLSYAIGVAKPISILVDSFGTGKVSDSELTQLVQDQFDLRPGAIIKAFDLQNLPSIRGGRFYRDTAAYGHFGRTDILLPWEDVSQKAKELSLLK</sequence>
<feature type="chain" id="PRO_0000241016" description="S-adenosylmethionine synthase">
    <location>
        <begin position="1"/>
        <end position="409"/>
    </location>
</feature>
<feature type="region of interest" description="Flexible loop" evidence="1">
    <location>
        <begin position="100"/>
        <end position="110"/>
    </location>
</feature>
<feature type="binding site" description="in other chain" evidence="1">
    <location>
        <position position="15"/>
    </location>
    <ligand>
        <name>ATP</name>
        <dbReference type="ChEBI" id="CHEBI:30616"/>
        <note>ligand shared between two neighboring subunits</note>
    </ligand>
</feature>
<feature type="binding site" evidence="1">
    <location>
        <position position="17"/>
    </location>
    <ligand>
        <name>Mg(2+)</name>
        <dbReference type="ChEBI" id="CHEBI:18420"/>
    </ligand>
</feature>
<feature type="binding site" evidence="1">
    <location>
        <position position="43"/>
    </location>
    <ligand>
        <name>K(+)</name>
        <dbReference type="ChEBI" id="CHEBI:29103"/>
    </ligand>
</feature>
<feature type="binding site" description="in other chain" evidence="1">
    <location>
        <position position="56"/>
    </location>
    <ligand>
        <name>L-methionine</name>
        <dbReference type="ChEBI" id="CHEBI:57844"/>
        <note>ligand shared between two neighboring subunits</note>
    </ligand>
</feature>
<feature type="binding site" description="in other chain" evidence="1">
    <location>
        <position position="100"/>
    </location>
    <ligand>
        <name>L-methionine</name>
        <dbReference type="ChEBI" id="CHEBI:57844"/>
        <note>ligand shared between two neighboring subunits</note>
    </ligand>
</feature>
<feature type="binding site" description="in other chain" evidence="1">
    <location>
        <begin position="171"/>
        <end position="173"/>
    </location>
    <ligand>
        <name>ATP</name>
        <dbReference type="ChEBI" id="CHEBI:30616"/>
        <note>ligand shared between two neighboring subunits</note>
    </ligand>
</feature>
<feature type="binding site" description="in other chain" evidence="1">
    <location>
        <begin position="248"/>
        <end position="249"/>
    </location>
    <ligand>
        <name>ATP</name>
        <dbReference type="ChEBI" id="CHEBI:30616"/>
        <note>ligand shared between two neighboring subunits</note>
    </ligand>
</feature>
<feature type="binding site" evidence="1">
    <location>
        <position position="257"/>
    </location>
    <ligand>
        <name>ATP</name>
        <dbReference type="ChEBI" id="CHEBI:30616"/>
        <note>ligand shared between two neighboring subunits</note>
    </ligand>
</feature>
<feature type="binding site" evidence="1">
    <location>
        <position position="257"/>
    </location>
    <ligand>
        <name>L-methionine</name>
        <dbReference type="ChEBI" id="CHEBI:57844"/>
        <note>ligand shared between two neighboring subunits</note>
    </ligand>
</feature>
<feature type="binding site" description="in other chain" evidence="1">
    <location>
        <begin position="263"/>
        <end position="264"/>
    </location>
    <ligand>
        <name>ATP</name>
        <dbReference type="ChEBI" id="CHEBI:30616"/>
        <note>ligand shared between two neighboring subunits</note>
    </ligand>
</feature>
<feature type="binding site" evidence="1">
    <location>
        <position position="280"/>
    </location>
    <ligand>
        <name>ATP</name>
        <dbReference type="ChEBI" id="CHEBI:30616"/>
        <note>ligand shared between two neighboring subunits</note>
    </ligand>
</feature>
<feature type="binding site" evidence="1">
    <location>
        <position position="284"/>
    </location>
    <ligand>
        <name>ATP</name>
        <dbReference type="ChEBI" id="CHEBI:30616"/>
        <note>ligand shared between two neighboring subunits</note>
    </ligand>
</feature>
<feature type="binding site" description="in other chain" evidence="1">
    <location>
        <position position="288"/>
    </location>
    <ligand>
        <name>L-methionine</name>
        <dbReference type="ChEBI" id="CHEBI:57844"/>
        <note>ligand shared between two neighboring subunits</note>
    </ligand>
</feature>
<proteinExistence type="inferred from homology"/>